<accession>A1SYY1</accession>
<sequence length="567" mass="61376">MATIDKHSYAHMFGPTVGDRVRLADTDLWLEVEKDYTQYGEEVKFGGGKVIRDGMGQSQASCFDTVDLVITNALIVDHWGIIKADVGIKEGRIAIIGKAGNPDIQDNIDIEIGPGTEVIAGEGKILTAGGIDAHIHFICPQQIEEAQMSGVTTMIGGGTGPATGTNATTCTSGPWNIHKMLQATNDFAMNFGFLGKGNTSLPLALEEQIEAGVCGLKLHEDWGTTPASIDNCLAVAERYDVQVAIHTDTLNEAGFVEDTMAAFKGRTIHTYHTEGAGGGHSPDIIRACGEPNVLPSSTNPTRPYTVNTIDEHLDMLMVCHHLDPSIPEDVAFADSRIRKESIAAEDIMHDLGAISMIASDSQAMGRVGEMITRTWQTANKMKQQRGPLAPDTERNDNFRIKRYIAKYTINPAISHGISHEVGSIEVGKLADLVLWKPAFFGIKPAMILKSGFIAAAPMGDANASIPTPQPVYYRPMFGSFGSAAAKTSMTFLSQAAIDQGVPEKIGMTRMVGVCKNTRNIGKKDMIHNNWQPKIEVDAQTYEVRADGELLTCEPATELPLTQRYCLF</sequence>
<proteinExistence type="inferred from homology"/>
<name>URE1_PSYIN</name>
<keyword id="KW-0963">Cytoplasm</keyword>
<keyword id="KW-0378">Hydrolase</keyword>
<keyword id="KW-0479">Metal-binding</keyword>
<keyword id="KW-0533">Nickel</keyword>
<keyword id="KW-1185">Reference proteome</keyword>
<protein>
    <recommendedName>
        <fullName evidence="1">Urease subunit alpha</fullName>
        <ecNumber evidence="1">3.5.1.5</ecNumber>
    </recommendedName>
    <alternativeName>
        <fullName evidence="1">Urea amidohydrolase subunit alpha</fullName>
    </alternativeName>
</protein>
<feature type="chain" id="PRO_1000070686" description="Urease subunit alpha">
    <location>
        <begin position="1"/>
        <end position="567"/>
    </location>
</feature>
<feature type="domain" description="Urease" evidence="1">
    <location>
        <begin position="129"/>
        <end position="567"/>
    </location>
</feature>
<feature type="active site" description="Proton donor" evidence="1">
    <location>
        <position position="320"/>
    </location>
</feature>
<feature type="binding site" evidence="1">
    <location>
        <position position="134"/>
    </location>
    <ligand>
        <name>Ni(2+)</name>
        <dbReference type="ChEBI" id="CHEBI:49786"/>
        <label>1</label>
    </ligand>
</feature>
<feature type="binding site" evidence="1">
    <location>
        <position position="136"/>
    </location>
    <ligand>
        <name>Ni(2+)</name>
        <dbReference type="ChEBI" id="CHEBI:49786"/>
        <label>1</label>
    </ligand>
</feature>
<feature type="binding site" description="via carbamate group" evidence="1">
    <location>
        <position position="217"/>
    </location>
    <ligand>
        <name>Ni(2+)</name>
        <dbReference type="ChEBI" id="CHEBI:49786"/>
        <label>1</label>
    </ligand>
</feature>
<feature type="binding site" description="via carbamate group" evidence="1">
    <location>
        <position position="217"/>
    </location>
    <ligand>
        <name>Ni(2+)</name>
        <dbReference type="ChEBI" id="CHEBI:49786"/>
        <label>2</label>
    </ligand>
</feature>
<feature type="binding site" evidence="1">
    <location>
        <position position="219"/>
    </location>
    <ligand>
        <name>substrate</name>
    </ligand>
</feature>
<feature type="binding site" evidence="1">
    <location>
        <position position="246"/>
    </location>
    <ligand>
        <name>Ni(2+)</name>
        <dbReference type="ChEBI" id="CHEBI:49786"/>
        <label>2</label>
    </ligand>
</feature>
<feature type="binding site" evidence="1">
    <location>
        <position position="272"/>
    </location>
    <ligand>
        <name>Ni(2+)</name>
        <dbReference type="ChEBI" id="CHEBI:49786"/>
        <label>2</label>
    </ligand>
</feature>
<feature type="binding site" evidence="1">
    <location>
        <position position="360"/>
    </location>
    <ligand>
        <name>Ni(2+)</name>
        <dbReference type="ChEBI" id="CHEBI:49786"/>
        <label>1</label>
    </ligand>
</feature>
<feature type="modified residue" description="N6-carboxylysine" evidence="1">
    <location>
        <position position="217"/>
    </location>
</feature>
<gene>
    <name evidence="1" type="primary">ureC</name>
    <name type="ordered locus">Ping_2994</name>
</gene>
<reference key="1">
    <citation type="journal article" date="2008" name="BMC Genomics">
        <title>Genomics of an extreme psychrophile, Psychromonas ingrahamii.</title>
        <authorList>
            <person name="Riley M."/>
            <person name="Staley J.T."/>
            <person name="Danchin A."/>
            <person name="Wang T.Z."/>
            <person name="Brettin T.S."/>
            <person name="Hauser L.J."/>
            <person name="Land M.L."/>
            <person name="Thompson L.S."/>
        </authorList>
    </citation>
    <scope>NUCLEOTIDE SEQUENCE [LARGE SCALE GENOMIC DNA]</scope>
    <source>
        <strain>DSM 17664 / CCUG 51855 / 37</strain>
    </source>
</reference>
<organism>
    <name type="scientific">Psychromonas ingrahamii (strain DSM 17664 / CCUG 51855 / 37)</name>
    <dbReference type="NCBI Taxonomy" id="357804"/>
    <lineage>
        <taxon>Bacteria</taxon>
        <taxon>Pseudomonadati</taxon>
        <taxon>Pseudomonadota</taxon>
        <taxon>Gammaproteobacteria</taxon>
        <taxon>Alteromonadales</taxon>
        <taxon>Psychromonadaceae</taxon>
        <taxon>Psychromonas</taxon>
    </lineage>
</organism>
<comment type="catalytic activity">
    <reaction evidence="1">
        <text>urea + 2 H2O + H(+) = hydrogencarbonate + 2 NH4(+)</text>
        <dbReference type="Rhea" id="RHEA:20557"/>
        <dbReference type="ChEBI" id="CHEBI:15377"/>
        <dbReference type="ChEBI" id="CHEBI:15378"/>
        <dbReference type="ChEBI" id="CHEBI:16199"/>
        <dbReference type="ChEBI" id="CHEBI:17544"/>
        <dbReference type="ChEBI" id="CHEBI:28938"/>
        <dbReference type="EC" id="3.5.1.5"/>
    </reaction>
</comment>
<comment type="cofactor">
    <cofactor evidence="1">
        <name>Ni cation</name>
        <dbReference type="ChEBI" id="CHEBI:25516"/>
    </cofactor>
    <text evidence="1">Binds 2 nickel ions per subunit.</text>
</comment>
<comment type="pathway">
    <text evidence="1">Nitrogen metabolism; urea degradation; CO(2) and NH(3) from urea (urease route): step 1/1.</text>
</comment>
<comment type="subunit">
    <text evidence="1">Heterotrimer of UreA (gamma), UreB (beta) and UreC (alpha) subunits. Three heterotrimers associate to form the active enzyme.</text>
</comment>
<comment type="subcellular location">
    <subcellularLocation>
        <location evidence="1">Cytoplasm</location>
    </subcellularLocation>
</comment>
<comment type="PTM">
    <text evidence="1">Carboxylation allows a single lysine to coordinate two nickel ions.</text>
</comment>
<comment type="similarity">
    <text evidence="1">Belongs to the metallo-dependent hydrolases superfamily. Urease alpha subunit family.</text>
</comment>
<dbReference type="EC" id="3.5.1.5" evidence="1"/>
<dbReference type="EMBL" id="CP000510">
    <property type="protein sequence ID" value="ABM04696.1"/>
    <property type="molecule type" value="Genomic_DNA"/>
</dbReference>
<dbReference type="RefSeq" id="WP_011771250.1">
    <property type="nucleotide sequence ID" value="NC_008709.1"/>
</dbReference>
<dbReference type="SMR" id="A1SYY1"/>
<dbReference type="STRING" id="357804.Ping_2994"/>
<dbReference type="MEROPS" id="M38.982"/>
<dbReference type="KEGG" id="pin:Ping_2994"/>
<dbReference type="eggNOG" id="COG0804">
    <property type="taxonomic scope" value="Bacteria"/>
</dbReference>
<dbReference type="HOGENOM" id="CLU_000980_2_0_6"/>
<dbReference type="OrthoDB" id="9802793at2"/>
<dbReference type="UniPathway" id="UPA00258">
    <property type="reaction ID" value="UER00370"/>
</dbReference>
<dbReference type="Proteomes" id="UP000000639">
    <property type="component" value="Chromosome"/>
</dbReference>
<dbReference type="GO" id="GO:0005737">
    <property type="term" value="C:cytoplasm"/>
    <property type="evidence" value="ECO:0007669"/>
    <property type="project" value="UniProtKB-SubCell"/>
</dbReference>
<dbReference type="GO" id="GO:0016151">
    <property type="term" value="F:nickel cation binding"/>
    <property type="evidence" value="ECO:0007669"/>
    <property type="project" value="UniProtKB-UniRule"/>
</dbReference>
<dbReference type="GO" id="GO:0009039">
    <property type="term" value="F:urease activity"/>
    <property type="evidence" value="ECO:0007669"/>
    <property type="project" value="UniProtKB-UniRule"/>
</dbReference>
<dbReference type="GO" id="GO:0043419">
    <property type="term" value="P:urea catabolic process"/>
    <property type="evidence" value="ECO:0007669"/>
    <property type="project" value="UniProtKB-UniRule"/>
</dbReference>
<dbReference type="CDD" id="cd00375">
    <property type="entry name" value="Urease_alpha"/>
    <property type="match status" value="1"/>
</dbReference>
<dbReference type="Gene3D" id="3.20.20.140">
    <property type="entry name" value="Metal-dependent hydrolases"/>
    <property type="match status" value="1"/>
</dbReference>
<dbReference type="Gene3D" id="2.30.40.10">
    <property type="entry name" value="Urease, subunit C, domain 1"/>
    <property type="match status" value="1"/>
</dbReference>
<dbReference type="HAMAP" id="MF_01953">
    <property type="entry name" value="Urease_alpha"/>
    <property type="match status" value="1"/>
</dbReference>
<dbReference type="InterPro" id="IPR006680">
    <property type="entry name" value="Amidohydro-rel"/>
</dbReference>
<dbReference type="InterPro" id="IPR011059">
    <property type="entry name" value="Metal-dep_hydrolase_composite"/>
</dbReference>
<dbReference type="InterPro" id="IPR032466">
    <property type="entry name" value="Metal_Hydrolase"/>
</dbReference>
<dbReference type="InterPro" id="IPR011612">
    <property type="entry name" value="Urease_alpha_N_dom"/>
</dbReference>
<dbReference type="InterPro" id="IPR050112">
    <property type="entry name" value="Urease_alpha_subunit"/>
</dbReference>
<dbReference type="InterPro" id="IPR017950">
    <property type="entry name" value="Urease_AS"/>
</dbReference>
<dbReference type="InterPro" id="IPR005848">
    <property type="entry name" value="Urease_asu"/>
</dbReference>
<dbReference type="InterPro" id="IPR017951">
    <property type="entry name" value="Urease_asu_c"/>
</dbReference>
<dbReference type="InterPro" id="IPR029754">
    <property type="entry name" value="Urease_Ni-bd"/>
</dbReference>
<dbReference type="NCBIfam" id="NF009685">
    <property type="entry name" value="PRK13206.1"/>
    <property type="match status" value="1"/>
</dbReference>
<dbReference type="NCBIfam" id="NF009686">
    <property type="entry name" value="PRK13207.1"/>
    <property type="match status" value="1"/>
</dbReference>
<dbReference type="NCBIfam" id="TIGR01792">
    <property type="entry name" value="urease_alph"/>
    <property type="match status" value="1"/>
</dbReference>
<dbReference type="PANTHER" id="PTHR43440">
    <property type="entry name" value="UREASE"/>
    <property type="match status" value="1"/>
</dbReference>
<dbReference type="PANTHER" id="PTHR43440:SF1">
    <property type="entry name" value="UREASE"/>
    <property type="match status" value="1"/>
</dbReference>
<dbReference type="Pfam" id="PF01979">
    <property type="entry name" value="Amidohydro_1"/>
    <property type="match status" value="1"/>
</dbReference>
<dbReference type="Pfam" id="PF00449">
    <property type="entry name" value="Urease_alpha"/>
    <property type="match status" value="1"/>
</dbReference>
<dbReference type="PRINTS" id="PR01752">
    <property type="entry name" value="UREASE"/>
</dbReference>
<dbReference type="SUPFAM" id="SSF51338">
    <property type="entry name" value="Composite domain of metallo-dependent hydrolases"/>
    <property type="match status" value="2"/>
</dbReference>
<dbReference type="SUPFAM" id="SSF51556">
    <property type="entry name" value="Metallo-dependent hydrolases"/>
    <property type="match status" value="1"/>
</dbReference>
<dbReference type="PROSITE" id="PS01120">
    <property type="entry name" value="UREASE_1"/>
    <property type="match status" value="1"/>
</dbReference>
<dbReference type="PROSITE" id="PS00145">
    <property type="entry name" value="UREASE_2"/>
    <property type="match status" value="1"/>
</dbReference>
<dbReference type="PROSITE" id="PS51368">
    <property type="entry name" value="UREASE_3"/>
    <property type="match status" value="1"/>
</dbReference>
<evidence type="ECO:0000255" key="1">
    <source>
        <dbReference type="HAMAP-Rule" id="MF_01953"/>
    </source>
</evidence>